<reference key="1">
    <citation type="journal article" date="2007" name="J. Bacteriol.">
        <title>Genome sequence of Avery's virulent serotype 2 strain D39 of Streptococcus pneumoniae and comparison with that of unencapsulated laboratory strain R6.</title>
        <authorList>
            <person name="Lanie J.A."/>
            <person name="Ng W.-L."/>
            <person name="Kazmierczak K.M."/>
            <person name="Andrzejewski T.M."/>
            <person name="Davidsen T.M."/>
            <person name="Wayne K.J."/>
            <person name="Tettelin H."/>
            <person name="Glass J.I."/>
            <person name="Winkler M.E."/>
        </authorList>
    </citation>
    <scope>NUCLEOTIDE SEQUENCE [LARGE SCALE GENOMIC DNA]</scope>
    <source>
        <strain>D39 / NCTC 7466</strain>
    </source>
</reference>
<gene>
    <name evidence="1" type="primary">rpsB</name>
    <name type="ordered locus">SPD_2042</name>
</gene>
<name>RS2_STRP2</name>
<organism>
    <name type="scientific">Streptococcus pneumoniae serotype 2 (strain D39 / NCTC 7466)</name>
    <dbReference type="NCBI Taxonomy" id="373153"/>
    <lineage>
        <taxon>Bacteria</taxon>
        <taxon>Bacillati</taxon>
        <taxon>Bacillota</taxon>
        <taxon>Bacilli</taxon>
        <taxon>Lactobacillales</taxon>
        <taxon>Streptococcaceae</taxon>
        <taxon>Streptococcus</taxon>
    </lineage>
</organism>
<protein>
    <recommendedName>
        <fullName evidence="1">Small ribosomal subunit protein uS2</fullName>
    </recommendedName>
    <alternativeName>
        <fullName evidence="2">30S ribosomal protein S2</fullName>
    </alternativeName>
</protein>
<keyword id="KW-1185">Reference proteome</keyword>
<keyword id="KW-0687">Ribonucleoprotein</keyword>
<keyword id="KW-0689">Ribosomal protein</keyword>
<proteinExistence type="inferred from homology"/>
<accession>Q04HW3</accession>
<evidence type="ECO:0000255" key="1">
    <source>
        <dbReference type="HAMAP-Rule" id="MF_00291"/>
    </source>
</evidence>
<evidence type="ECO:0000305" key="2"/>
<sequence>MAVISMKQLLEAGVHFGHQTRRWNPKMAKYIFTERNGIHVIDLQQTVKYADQAYDFMRDAAANDAVVLFVGTKKQAADAVAEEAVRSGQYFINHRWLGGTLTNWGTIQKRIARLKEIKRMEEDGTFEVLPKKEVALLNKQRARLEKFLGGIEDMPRIPDVMYVVDPHKEQIAVKEAKKLGIPVVAMVDTNTDPDDIDVIIPANDDAIRAVKLITAKLADAIIEGRQGEDAVAVEAEFAASETQADSIEEIVEVVEGDNK</sequence>
<dbReference type="EMBL" id="CP000410">
    <property type="protein sequence ID" value="ABJ55424.1"/>
    <property type="molecule type" value="Genomic_DNA"/>
</dbReference>
<dbReference type="RefSeq" id="WP_000268467.1">
    <property type="nucleotide sequence ID" value="NZ_JAMLJR010000007.1"/>
</dbReference>
<dbReference type="SMR" id="Q04HW3"/>
<dbReference type="PaxDb" id="373153-SPD_2042"/>
<dbReference type="KEGG" id="spd:SPD_2042"/>
<dbReference type="eggNOG" id="COG0052">
    <property type="taxonomic scope" value="Bacteria"/>
</dbReference>
<dbReference type="HOGENOM" id="CLU_040318_1_2_9"/>
<dbReference type="BioCyc" id="SPNE373153:G1G6V-2192-MONOMER"/>
<dbReference type="Proteomes" id="UP000001452">
    <property type="component" value="Chromosome"/>
</dbReference>
<dbReference type="GO" id="GO:0022627">
    <property type="term" value="C:cytosolic small ribosomal subunit"/>
    <property type="evidence" value="ECO:0007669"/>
    <property type="project" value="TreeGrafter"/>
</dbReference>
<dbReference type="GO" id="GO:0003735">
    <property type="term" value="F:structural constituent of ribosome"/>
    <property type="evidence" value="ECO:0007669"/>
    <property type="project" value="InterPro"/>
</dbReference>
<dbReference type="GO" id="GO:0006412">
    <property type="term" value="P:translation"/>
    <property type="evidence" value="ECO:0007669"/>
    <property type="project" value="UniProtKB-UniRule"/>
</dbReference>
<dbReference type="CDD" id="cd01425">
    <property type="entry name" value="RPS2"/>
    <property type="match status" value="1"/>
</dbReference>
<dbReference type="FunFam" id="1.10.287.610:FF:000001">
    <property type="entry name" value="30S ribosomal protein S2"/>
    <property type="match status" value="1"/>
</dbReference>
<dbReference type="Gene3D" id="3.40.50.10490">
    <property type="entry name" value="Glucose-6-phosphate isomerase like protein, domain 1"/>
    <property type="match status" value="1"/>
</dbReference>
<dbReference type="Gene3D" id="1.10.287.610">
    <property type="entry name" value="Helix hairpin bin"/>
    <property type="match status" value="1"/>
</dbReference>
<dbReference type="HAMAP" id="MF_00291_B">
    <property type="entry name" value="Ribosomal_uS2_B"/>
    <property type="match status" value="1"/>
</dbReference>
<dbReference type="InterPro" id="IPR001865">
    <property type="entry name" value="Ribosomal_uS2"/>
</dbReference>
<dbReference type="InterPro" id="IPR005706">
    <property type="entry name" value="Ribosomal_uS2_bac/mit/plastid"/>
</dbReference>
<dbReference type="InterPro" id="IPR018130">
    <property type="entry name" value="Ribosomal_uS2_CS"/>
</dbReference>
<dbReference type="InterPro" id="IPR023591">
    <property type="entry name" value="Ribosomal_uS2_flav_dom_sf"/>
</dbReference>
<dbReference type="NCBIfam" id="TIGR01011">
    <property type="entry name" value="rpsB_bact"/>
    <property type="match status" value="1"/>
</dbReference>
<dbReference type="PANTHER" id="PTHR12534">
    <property type="entry name" value="30S RIBOSOMAL PROTEIN S2 PROKARYOTIC AND ORGANELLAR"/>
    <property type="match status" value="1"/>
</dbReference>
<dbReference type="PANTHER" id="PTHR12534:SF0">
    <property type="entry name" value="SMALL RIBOSOMAL SUBUNIT PROTEIN US2M"/>
    <property type="match status" value="1"/>
</dbReference>
<dbReference type="Pfam" id="PF00318">
    <property type="entry name" value="Ribosomal_S2"/>
    <property type="match status" value="1"/>
</dbReference>
<dbReference type="PRINTS" id="PR00395">
    <property type="entry name" value="RIBOSOMALS2"/>
</dbReference>
<dbReference type="SUPFAM" id="SSF52313">
    <property type="entry name" value="Ribosomal protein S2"/>
    <property type="match status" value="1"/>
</dbReference>
<dbReference type="PROSITE" id="PS00962">
    <property type="entry name" value="RIBOSOMAL_S2_1"/>
    <property type="match status" value="1"/>
</dbReference>
<comment type="similarity">
    <text evidence="1">Belongs to the universal ribosomal protein uS2 family.</text>
</comment>
<feature type="chain" id="PRO_1000004086" description="Small ribosomal subunit protein uS2">
    <location>
        <begin position="1"/>
        <end position="259"/>
    </location>
</feature>